<keyword id="KW-0903">Direct protein sequencing</keyword>
<keyword id="KW-1015">Disulfide bond</keyword>
<keyword id="KW-0378">Hydrolase</keyword>
<keyword id="KW-0645">Protease</keyword>
<keyword id="KW-1185">Reference proteome</keyword>
<keyword id="KW-0964">Secreted</keyword>
<keyword id="KW-0720">Serine protease</keyword>
<keyword id="KW-0732">Signal</keyword>
<keyword id="KW-0865">Zymogen</keyword>
<proteinExistence type="evidence at protein level"/>
<gene>
    <name type="primary">CMA1</name>
</gene>
<sequence>MHCLPLTLLLLLLCSRAEAEEIIGGTESKPHSRPYMAHLEILTLRNHLASCGGFLIRRNFVLTAAHCAGRFIMVTLGAHNIQKKEDTWQKLEVIKQFPHPKYDDLTLRHDIMLLKLKEKANLTLAVGTLPLSPQFNFVPPGRMCRVAGWGKRQVNGSGSDTLQEVKLRLMDPQACRHYMAFDHNLQLCVGNPRKTKSAFKGDSGGPLLCAGVAQGIVSYGQNDAKPPAVFTRISHYRPWINKVLKQNKA</sequence>
<feature type="signal peptide">
    <location>
        <begin position="1"/>
        <end position="19"/>
    </location>
</feature>
<feature type="propeptide" id="PRO_0000027431" description="Activation peptide" evidence="3">
    <location>
        <begin position="20"/>
        <end position="21"/>
    </location>
</feature>
<feature type="chain" id="PRO_0000027432" description="Chymase">
    <location>
        <begin position="22"/>
        <end position="249"/>
    </location>
</feature>
<feature type="domain" description="Peptidase S1" evidence="2">
    <location>
        <begin position="22"/>
        <end position="245"/>
    </location>
</feature>
<feature type="active site" description="Charge relay system" evidence="1">
    <location>
        <position position="66"/>
    </location>
</feature>
<feature type="active site" description="Charge relay system" evidence="1">
    <location>
        <position position="110"/>
    </location>
</feature>
<feature type="active site" description="Charge relay system" evidence="1">
    <location>
        <position position="203"/>
    </location>
</feature>
<feature type="disulfide bond" evidence="2">
    <location>
        <begin position="51"/>
        <end position="67"/>
    </location>
</feature>
<feature type="disulfide bond" evidence="2">
    <location>
        <begin position="144"/>
        <end position="209"/>
    </location>
</feature>
<feature type="disulfide bond" evidence="2">
    <location>
        <begin position="175"/>
        <end position="188"/>
    </location>
</feature>
<feature type="sequence conflict" description="In Ref. 3; AA sequence." evidence="4" ref="3">
    <original>K</original>
    <variation>R</variation>
    <location>
        <position position="29"/>
    </location>
</feature>
<feature type="sequence conflict" description="In Ref. 3; AA sequence." evidence="4" ref="3">
    <original>H</original>
    <variation>Q</variation>
    <location>
        <position position="38"/>
    </location>
</feature>
<feature type="sequence conflict" description="In Ref. 3; AA sequence." evidence="4" ref="3">
    <original>R</original>
    <variation>T</variation>
    <location>
        <position position="45"/>
    </location>
</feature>
<organism>
    <name type="scientific">Canis lupus familiaris</name>
    <name type="common">Dog</name>
    <name type="synonym">Canis familiaris</name>
    <dbReference type="NCBI Taxonomy" id="9615"/>
    <lineage>
        <taxon>Eukaryota</taxon>
        <taxon>Metazoa</taxon>
        <taxon>Chordata</taxon>
        <taxon>Craniata</taxon>
        <taxon>Vertebrata</taxon>
        <taxon>Euteleostomi</taxon>
        <taxon>Mammalia</taxon>
        <taxon>Eutheria</taxon>
        <taxon>Laurasiatheria</taxon>
        <taxon>Carnivora</taxon>
        <taxon>Caniformia</taxon>
        <taxon>Canidae</taxon>
        <taxon>Canis</taxon>
    </lineage>
</organism>
<reference key="1">
    <citation type="journal article" date="1990" name="Biochemistry">
        <title>Dog mast cell chymase: molecular cloning and characterization.</title>
        <authorList>
            <person name="Caughey G.H."/>
            <person name="Raymond W.W."/>
            <person name="Vanderslice P."/>
        </authorList>
    </citation>
    <scope>NUCLEOTIDE SEQUENCE [MRNA]</scope>
</reference>
<reference key="2">
    <citation type="journal article" date="1997" name="J. Immunol.">
        <title>Cloning and expression of the dog mast cell alpha-chymase gene.</title>
        <authorList>
            <person name="Caughey G.H."/>
            <person name="Blount J.L."/>
            <person name="Koerber K.L."/>
            <person name="Kitamura M."/>
            <person name="Fang K.C."/>
        </authorList>
    </citation>
    <scope>NUCLEOTIDE SEQUENCE [GENOMIC DNA]</scope>
    <source>
        <strain>Beagle</strain>
    </source>
</reference>
<reference key="3">
    <citation type="journal article" date="1988" name="Biochim. Biophys. Acta">
        <title>Purification and characterization of dog mastocytoma chymase: identification of an octapeptide conserved in chymotryptic leukocyte proteinases.</title>
        <authorList>
            <person name="Caughey G.H."/>
            <person name="Viro N.F."/>
            <person name="Lazarus S.C."/>
            <person name="Nadel J.A."/>
        </authorList>
    </citation>
    <scope>PROTEIN SEQUENCE OF 22-46</scope>
</reference>
<protein>
    <recommendedName>
        <fullName>Chymase</fullName>
        <ecNumber>3.4.21.39</ecNumber>
    </recommendedName>
    <alternativeName>
        <fullName>Alpha-chymase</fullName>
    </alternativeName>
    <alternativeName>
        <fullName>Mast cell protease I</fullName>
    </alternativeName>
</protein>
<dbReference type="EC" id="3.4.21.39"/>
<dbReference type="EMBL" id="J02904">
    <property type="protein sequence ID" value="AAA30835.1"/>
    <property type="molecule type" value="mRNA"/>
</dbReference>
<dbReference type="EMBL" id="U89607">
    <property type="protein sequence ID" value="AAB94641.1"/>
    <property type="molecule type" value="Genomic_DNA"/>
</dbReference>
<dbReference type="PIR" id="A35842">
    <property type="entry name" value="A35842"/>
</dbReference>
<dbReference type="RefSeq" id="NP_001013442.1">
    <property type="nucleotide sequence ID" value="NM_001013424.1"/>
</dbReference>
<dbReference type="SMR" id="P21842"/>
<dbReference type="FunCoup" id="P21842">
    <property type="interactions" value="35"/>
</dbReference>
<dbReference type="STRING" id="9615.ENSCAFP00000018316"/>
<dbReference type="MEROPS" id="S01.140"/>
<dbReference type="PaxDb" id="9612-ENSCAFP00000018316"/>
<dbReference type="Ensembl" id="ENSCAFT00000019746.5">
    <property type="protein sequence ID" value="ENSCAFP00000018316.3"/>
    <property type="gene ID" value="ENSCAFG00000012443.5"/>
</dbReference>
<dbReference type="Ensembl" id="ENSCAFT00030022936.1">
    <property type="protein sequence ID" value="ENSCAFP00030020008.1"/>
    <property type="gene ID" value="ENSCAFG00030012378.1"/>
</dbReference>
<dbReference type="Ensembl" id="ENSCAFT00040015211.1">
    <property type="protein sequence ID" value="ENSCAFP00040013176.1"/>
    <property type="gene ID" value="ENSCAFG00040008127.1"/>
</dbReference>
<dbReference type="Ensembl" id="ENSCAFT00845014479.1">
    <property type="protein sequence ID" value="ENSCAFP00845011218.1"/>
    <property type="gene ID" value="ENSCAFG00845008224.1"/>
</dbReference>
<dbReference type="GeneID" id="490628"/>
<dbReference type="KEGG" id="cfa:490628"/>
<dbReference type="CTD" id="1215"/>
<dbReference type="VEuPathDB" id="HostDB:ENSCAFG00845008224"/>
<dbReference type="VGNC" id="VGNC:49768">
    <property type="gene designation" value="CMA1"/>
</dbReference>
<dbReference type="eggNOG" id="KOG3627">
    <property type="taxonomic scope" value="Eukaryota"/>
</dbReference>
<dbReference type="GeneTree" id="ENSGT01030000234551"/>
<dbReference type="HOGENOM" id="CLU_006842_1_0_1"/>
<dbReference type="InParanoid" id="P21842"/>
<dbReference type="OMA" id="CAGRFIM"/>
<dbReference type="OrthoDB" id="5565075at2759"/>
<dbReference type="TreeFam" id="TF333630"/>
<dbReference type="Reactome" id="R-CFA-1433557">
    <property type="pathway name" value="Signaling by SCF-KIT"/>
</dbReference>
<dbReference type="Reactome" id="R-CFA-1592389">
    <property type="pathway name" value="Activation of Matrix Metalloproteinases"/>
</dbReference>
<dbReference type="Reactome" id="R-CFA-2022377">
    <property type="pathway name" value="Metabolism of Angiotensinogen to Angiotensins"/>
</dbReference>
<dbReference type="Proteomes" id="UP000002254">
    <property type="component" value="Chromosome 8"/>
</dbReference>
<dbReference type="Proteomes" id="UP000694429">
    <property type="component" value="Chromosome 8"/>
</dbReference>
<dbReference type="Proteomes" id="UP000694542">
    <property type="component" value="Chromosome 8"/>
</dbReference>
<dbReference type="Proteomes" id="UP000805418">
    <property type="component" value="Chromosome 8"/>
</dbReference>
<dbReference type="Bgee" id="ENSCAFG00000012443">
    <property type="expression patterns" value="Expressed in blood and 41 other cell types or tissues"/>
</dbReference>
<dbReference type="GO" id="GO:0005615">
    <property type="term" value="C:extracellular space"/>
    <property type="evidence" value="ECO:0000318"/>
    <property type="project" value="GO_Central"/>
</dbReference>
<dbReference type="GO" id="GO:0004252">
    <property type="term" value="F:serine-type endopeptidase activity"/>
    <property type="evidence" value="ECO:0000318"/>
    <property type="project" value="GO_Central"/>
</dbReference>
<dbReference type="GO" id="GO:0051604">
    <property type="term" value="P:protein maturation"/>
    <property type="evidence" value="ECO:0000318"/>
    <property type="project" value="GO_Central"/>
</dbReference>
<dbReference type="GO" id="GO:0006508">
    <property type="term" value="P:proteolysis"/>
    <property type="evidence" value="ECO:0007669"/>
    <property type="project" value="UniProtKB-KW"/>
</dbReference>
<dbReference type="CDD" id="cd00190">
    <property type="entry name" value="Tryp_SPc"/>
    <property type="match status" value="1"/>
</dbReference>
<dbReference type="FunFam" id="2.40.10.10:FF:000014">
    <property type="entry name" value="Complement factor D"/>
    <property type="match status" value="1"/>
</dbReference>
<dbReference type="FunFam" id="2.40.10.10:FF:000005">
    <property type="entry name" value="Serine protease 37"/>
    <property type="match status" value="1"/>
</dbReference>
<dbReference type="Gene3D" id="2.40.10.10">
    <property type="entry name" value="Trypsin-like serine proteases"/>
    <property type="match status" value="2"/>
</dbReference>
<dbReference type="InterPro" id="IPR009003">
    <property type="entry name" value="Peptidase_S1_PA"/>
</dbReference>
<dbReference type="InterPro" id="IPR043504">
    <property type="entry name" value="Peptidase_S1_PA_chymotrypsin"/>
</dbReference>
<dbReference type="InterPro" id="IPR001314">
    <property type="entry name" value="Peptidase_S1A"/>
</dbReference>
<dbReference type="InterPro" id="IPR001254">
    <property type="entry name" value="Trypsin_dom"/>
</dbReference>
<dbReference type="InterPro" id="IPR018114">
    <property type="entry name" value="TRYPSIN_HIS"/>
</dbReference>
<dbReference type="InterPro" id="IPR033116">
    <property type="entry name" value="TRYPSIN_SER"/>
</dbReference>
<dbReference type="PANTHER" id="PTHR24271:SF24">
    <property type="entry name" value="CHYMASE"/>
    <property type="match status" value="1"/>
</dbReference>
<dbReference type="PANTHER" id="PTHR24271">
    <property type="entry name" value="KALLIKREIN-RELATED"/>
    <property type="match status" value="1"/>
</dbReference>
<dbReference type="Pfam" id="PF00089">
    <property type="entry name" value="Trypsin"/>
    <property type="match status" value="1"/>
</dbReference>
<dbReference type="PRINTS" id="PR00722">
    <property type="entry name" value="CHYMOTRYPSIN"/>
</dbReference>
<dbReference type="SMART" id="SM00020">
    <property type="entry name" value="Tryp_SPc"/>
    <property type="match status" value="1"/>
</dbReference>
<dbReference type="SUPFAM" id="SSF50494">
    <property type="entry name" value="Trypsin-like serine proteases"/>
    <property type="match status" value="1"/>
</dbReference>
<dbReference type="PROSITE" id="PS50240">
    <property type="entry name" value="TRYPSIN_DOM"/>
    <property type="match status" value="1"/>
</dbReference>
<dbReference type="PROSITE" id="PS00134">
    <property type="entry name" value="TRYPSIN_HIS"/>
    <property type="match status" value="1"/>
</dbReference>
<dbReference type="PROSITE" id="PS00135">
    <property type="entry name" value="TRYPSIN_SER"/>
    <property type="match status" value="1"/>
</dbReference>
<name>CMA1_CANLF</name>
<accession>P21842</accession>
<evidence type="ECO:0000250" key="1"/>
<evidence type="ECO:0000255" key="2">
    <source>
        <dbReference type="PROSITE-ProRule" id="PRU00274"/>
    </source>
</evidence>
<evidence type="ECO:0000269" key="3">
    <source>
    </source>
</evidence>
<evidence type="ECO:0000305" key="4"/>
<comment type="function">
    <text>Major secreted protease of mast cells with suspected roles in vasoactive peptide generation, extracellular matrix degradation, and regulation of gland secretion.</text>
</comment>
<comment type="catalytic activity">
    <reaction>
        <text>Preferential cleavage: Phe-|-Xaa &gt; Tyr-|-Xaa &gt; Trp-|-Xaa &gt; Leu-|-Xaa.</text>
        <dbReference type="EC" id="3.4.21.39"/>
    </reaction>
</comment>
<comment type="subcellular location">
    <subcellularLocation>
        <location evidence="1">Secreted</location>
    </subcellularLocation>
    <subcellularLocation>
        <location evidence="1">Cytoplasmic granule</location>
    </subcellularLocation>
    <text evidence="1">Mast cell granules.</text>
</comment>
<comment type="similarity">
    <text evidence="2">Belongs to the peptidase S1 family. Granzyme subfamily.</text>
</comment>